<keyword id="KW-0028">Amino-acid biosynthesis</keyword>
<keyword id="KW-0963">Cytoplasm</keyword>
<keyword id="KW-0521">NADP</keyword>
<keyword id="KW-0560">Oxidoreductase</keyword>
<keyword id="KW-0641">Proline biosynthesis</keyword>
<keyword id="KW-1185">Reference proteome</keyword>
<accession>Q8UBS1</accession>
<proteinExistence type="inferred from homology"/>
<gene>
    <name evidence="1" type="primary">proA</name>
    <name type="ordered locus">Atu2779</name>
    <name type="ORF">AGR_C_5042</name>
</gene>
<organism>
    <name type="scientific">Agrobacterium fabrum (strain C58 / ATCC 33970)</name>
    <name type="common">Agrobacterium tumefaciens (strain C58)</name>
    <dbReference type="NCBI Taxonomy" id="176299"/>
    <lineage>
        <taxon>Bacteria</taxon>
        <taxon>Pseudomonadati</taxon>
        <taxon>Pseudomonadota</taxon>
        <taxon>Alphaproteobacteria</taxon>
        <taxon>Hyphomicrobiales</taxon>
        <taxon>Rhizobiaceae</taxon>
        <taxon>Rhizobium/Agrobacterium group</taxon>
        <taxon>Agrobacterium</taxon>
        <taxon>Agrobacterium tumefaciens complex</taxon>
    </lineage>
</organism>
<name>PROA_AGRFC</name>
<comment type="function">
    <text evidence="1">Catalyzes the NADPH-dependent reduction of L-glutamate 5-phosphate into L-glutamate 5-semialdehyde and phosphate. The product spontaneously undergoes cyclization to form 1-pyrroline-5-carboxylate.</text>
</comment>
<comment type="catalytic activity">
    <reaction evidence="1">
        <text>L-glutamate 5-semialdehyde + phosphate + NADP(+) = L-glutamyl 5-phosphate + NADPH + H(+)</text>
        <dbReference type="Rhea" id="RHEA:19541"/>
        <dbReference type="ChEBI" id="CHEBI:15378"/>
        <dbReference type="ChEBI" id="CHEBI:43474"/>
        <dbReference type="ChEBI" id="CHEBI:57783"/>
        <dbReference type="ChEBI" id="CHEBI:58066"/>
        <dbReference type="ChEBI" id="CHEBI:58274"/>
        <dbReference type="ChEBI" id="CHEBI:58349"/>
        <dbReference type="EC" id="1.2.1.41"/>
    </reaction>
</comment>
<comment type="pathway">
    <text evidence="1">Amino-acid biosynthesis; L-proline biosynthesis; L-glutamate 5-semialdehyde from L-glutamate: step 2/2.</text>
</comment>
<comment type="subcellular location">
    <subcellularLocation>
        <location evidence="1">Cytoplasm</location>
    </subcellularLocation>
</comment>
<comment type="similarity">
    <text evidence="1">Belongs to the gamma-glutamyl phosphate reductase family.</text>
</comment>
<comment type="sequence caution" evidence="2">
    <conflict type="erroneous initiation">
        <sequence resource="EMBL-CDS" id="AAK88494"/>
    </conflict>
</comment>
<evidence type="ECO:0000255" key="1">
    <source>
        <dbReference type="HAMAP-Rule" id="MF_00412"/>
    </source>
</evidence>
<evidence type="ECO:0000305" key="2"/>
<protein>
    <recommendedName>
        <fullName evidence="1">Gamma-glutamyl phosphate reductase</fullName>
        <shortName evidence="1">GPR</shortName>
        <ecNumber evidence="1">1.2.1.41</ecNumber>
    </recommendedName>
    <alternativeName>
        <fullName evidence="1">Glutamate-5-semialdehyde dehydrogenase</fullName>
    </alternativeName>
    <alternativeName>
        <fullName evidence="1">Glutamyl-gamma-semialdehyde dehydrogenase</fullName>
        <shortName evidence="1">GSA dehydrogenase</shortName>
    </alternativeName>
</protein>
<feature type="chain" id="PRO_0000189682" description="Gamma-glutamyl phosphate reductase">
    <location>
        <begin position="1"/>
        <end position="428"/>
    </location>
</feature>
<reference key="1">
    <citation type="journal article" date="2001" name="Science">
        <title>The genome of the natural genetic engineer Agrobacterium tumefaciens C58.</title>
        <authorList>
            <person name="Wood D.W."/>
            <person name="Setubal J.C."/>
            <person name="Kaul R."/>
            <person name="Monks D.E."/>
            <person name="Kitajima J.P."/>
            <person name="Okura V.K."/>
            <person name="Zhou Y."/>
            <person name="Chen L."/>
            <person name="Wood G.E."/>
            <person name="Almeida N.F. Jr."/>
            <person name="Woo L."/>
            <person name="Chen Y."/>
            <person name="Paulsen I.T."/>
            <person name="Eisen J.A."/>
            <person name="Karp P.D."/>
            <person name="Bovee D. Sr."/>
            <person name="Chapman P."/>
            <person name="Clendenning J."/>
            <person name="Deatherage G."/>
            <person name="Gillet W."/>
            <person name="Grant C."/>
            <person name="Kutyavin T."/>
            <person name="Levy R."/>
            <person name="Li M.-J."/>
            <person name="McClelland E."/>
            <person name="Palmieri A."/>
            <person name="Raymond C."/>
            <person name="Rouse G."/>
            <person name="Saenphimmachak C."/>
            <person name="Wu Z."/>
            <person name="Romero P."/>
            <person name="Gordon D."/>
            <person name="Zhang S."/>
            <person name="Yoo H."/>
            <person name="Tao Y."/>
            <person name="Biddle P."/>
            <person name="Jung M."/>
            <person name="Krespan W."/>
            <person name="Perry M."/>
            <person name="Gordon-Kamm B."/>
            <person name="Liao L."/>
            <person name="Kim S."/>
            <person name="Hendrick C."/>
            <person name="Zhao Z.-Y."/>
            <person name="Dolan M."/>
            <person name="Chumley F."/>
            <person name="Tingey S.V."/>
            <person name="Tomb J.-F."/>
            <person name="Gordon M.P."/>
            <person name="Olson M.V."/>
            <person name="Nester E.W."/>
        </authorList>
    </citation>
    <scope>NUCLEOTIDE SEQUENCE [LARGE SCALE GENOMIC DNA]</scope>
    <source>
        <strain>C58 / ATCC 33970</strain>
    </source>
</reference>
<reference key="2">
    <citation type="journal article" date="2001" name="Science">
        <title>Genome sequence of the plant pathogen and biotechnology agent Agrobacterium tumefaciens C58.</title>
        <authorList>
            <person name="Goodner B."/>
            <person name="Hinkle G."/>
            <person name="Gattung S."/>
            <person name="Miller N."/>
            <person name="Blanchard M."/>
            <person name="Qurollo B."/>
            <person name="Goldman B.S."/>
            <person name="Cao Y."/>
            <person name="Askenazi M."/>
            <person name="Halling C."/>
            <person name="Mullin L."/>
            <person name="Houmiel K."/>
            <person name="Gordon J."/>
            <person name="Vaudin M."/>
            <person name="Iartchouk O."/>
            <person name="Epp A."/>
            <person name="Liu F."/>
            <person name="Wollam C."/>
            <person name="Allinger M."/>
            <person name="Doughty D."/>
            <person name="Scott C."/>
            <person name="Lappas C."/>
            <person name="Markelz B."/>
            <person name="Flanagan C."/>
            <person name="Crowell C."/>
            <person name="Gurson J."/>
            <person name="Lomo C."/>
            <person name="Sear C."/>
            <person name="Strub G."/>
            <person name="Cielo C."/>
            <person name="Slater S."/>
        </authorList>
    </citation>
    <scope>NUCLEOTIDE SEQUENCE [LARGE SCALE GENOMIC DNA]</scope>
    <source>
        <strain>C58 / ATCC 33970</strain>
    </source>
</reference>
<dbReference type="EC" id="1.2.1.41" evidence="1"/>
<dbReference type="EMBL" id="AE007869">
    <property type="protein sequence ID" value="AAK88494.2"/>
    <property type="status" value="ALT_INIT"/>
    <property type="molecule type" value="Genomic_DNA"/>
</dbReference>
<dbReference type="PIR" id="AB2918">
    <property type="entry name" value="AB2918"/>
</dbReference>
<dbReference type="PIR" id="E97692">
    <property type="entry name" value="E97692"/>
</dbReference>
<dbReference type="RefSeq" id="NP_355709.2">
    <property type="nucleotide sequence ID" value="NC_003062.2"/>
</dbReference>
<dbReference type="RefSeq" id="WP_035258038.1">
    <property type="nucleotide sequence ID" value="NC_003062.2"/>
</dbReference>
<dbReference type="SMR" id="Q8UBS1"/>
<dbReference type="STRING" id="176299.Atu2779"/>
<dbReference type="EnsemblBacteria" id="AAK88494">
    <property type="protein sequence ID" value="AAK88494"/>
    <property type="gene ID" value="Atu2779"/>
</dbReference>
<dbReference type="GeneID" id="1134817"/>
<dbReference type="KEGG" id="atu:Atu2779"/>
<dbReference type="PATRIC" id="fig|176299.10.peg.2789"/>
<dbReference type="eggNOG" id="COG0014">
    <property type="taxonomic scope" value="Bacteria"/>
</dbReference>
<dbReference type="HOGENOM" id="CLU_030231_0_0_5"/>
<dbReference type="OrthoDB" id="9809970at2"/>
<dbReference type="UniPathway" id="UPA00098">
    <property type="reaction ID" value="UER00360"/>
</dbReference>
<dbReference type="Proteomes" id="UP000000813">
    <property type="component" value="Chromosome circular"/>
</dbReference>
<dbReference type="GO" id="GO:0005737">
    <property type="term" value="C:cytoplasm"/>
    <property type="evidence" value="ECO:0007669"/>
    <property type="project" value="UniProtKB-SubCell"/>
</dbReference>
<dbReference type="GO" id="GO:0004350">
    <property type="term" value="F:glutamate-5-semialdehyde dehydrogenase activity"/>
    <property type="evidence" value="ECO:0007669"/>
    <property type="project" value="UniProtKB-UniRule"/>
</dbReference>
<dbReference type="GO" id="GO:0050661">
    <property type="term" value="F:NADP binding"/>
    <property type="evidence" value="ECO:0007669"/>
    <property type="project" value="InterPro"/>
</dbReference>
<dbReference type="GO" id="GO:0055129">
    <property type="term" value="P:L-proline biosynthetic process"/>
    <property type="evidence" value="ECO:0007669"/>
    <property type="project" value="UniProtKB-UniRule"/>
</dbReference>
<dbReference type="CDD" id="cd07079">
    <property type="entry name" value="ALDH_F18-19_ProA-GPR"/>
    <property type="match status" value="1"/>
</dbReference>
<dbReference type="Gene3D" id="3.40.605.10">
    <property type="entry name" value="Aldehyde Dehydrogenase, Chain A, domain 1"/>
    <property type="match status" value="1"/>
</dbReference>
<dbReference type="Gene3D" id="3.40.309.10">
    <property type="entry name" value="Aldehyde Dehydrogenase, Chain A, domain 2"/>
    <property type="match status" value="1"/>
</dbReference>
<dbReference type="HAMAP" id="MF_00412">
    <property type="entry name" value="ProA"/>
    <property type="match status" value="1"/>
</dbReference>
<dbReference type="InterPro" id="IPR016161">
    <property type="entry name" value="Ald_DH/histidinol_DH"/>
</dbReference>
<dbReference type="InterPro" id="IPR016163">
    <property type="entry name" value="Ald_DH_C"/>
</dbReference>
<dbReference type="InterPro" id="IPR016162">
    <property type="entry name" value="Ald_DH_N"/>
</dbReference>
<dbReference type="InterPro" id="IPR015590">
    <property type="entry name" value="Aldehyde_DH_dom"/>
</dbReference>
<dbReference type="InterPro" id="IPR020593">
    <property type="entry name" value="G-glutamylP_reductase_CS"/>
</dbReference>
<dbReference type="InterPro" id="IPR012134">
    <property type="entry name" value="Glu-5-SA_DH"/>
</dbReference>
<dbReference type="InterPro" id="IPR000965">
    <property type="entry name" value="GPR_dom"/>
</dbReference>
<dbReference type="NCBIfam" id="NF001221">
    <property type="entry name" value="PRK00197.1"/>
    <property type="match status" value="1"/>
</dbReference>
<dbReference type="NCBIfam" id="TIGR00407">
    <property type="entry name" value="proA"/>
    <property type="match status" value="1"/>
</dbReference>
<dbReference type="PANTHER" id="PTHR11063:SF8">
    <property type="entry name" value="DELTA-1-PYRROLINE-5-CARBOXYLATE SYNTHASE"/>
    <property type="match status" value="1"/>
</dbReference>
<dbReference type="PANTHER" id="PTHR11063">
    <property type="entry name" value="GLUTAMATE SEMIALDEHYDE DEHYDROGENASE"/>
    <property type="match status" value="1"/>
</dbReference>
<dbReference type="Pfam" id="PF00171">
    <property type="entry name" value="Aldedh"/>
    <property type="match status" value="1"/>
</dbReference>
<dbReference type="PIRSF" id="PIRSF000151">
    <property type="entry name" value="GPR"/>
    <property type="match status" value="1"/>
</dbReference>
<dbReference type="SUPFAM" id="SSF53720">
    <property type="entry name" value="ALDH-like"/>
    <property type="match status" value="1"/>
</dbReference>
<dbReference type="PROSITE" id="PS01223">
    <property type="entry name" value="PROA"/>
    <property type="match status" value="1"/>
</dbReference>
<sequence length="428" mass="44630">MPEQAVKQSHDIDALMMTIGAQAKAASRPLSIAGTDQKNRALLAMASAIEASKEAILAANRKDLAAAESAGLAASFVDRLTLNDARIAGIAEGIRSVAALADPVGEVIAAWDRPNGLKIERVRTPLGVIGVIYESRPNVTADAGALCLKAGNAVILRGGSDSQHSSRAIHACLVQGLRIAGLPENAIQLVPVTDRAAVGALLSGLKGTVDVIVPRGGKSLVARVQSEARVPVFAHLEGICHIYVDKSADLDMAKAIVVNAKMRRTGICGAAETLLVDASAVSSHLEPVVKALLDAGCEVRGSQPVRNVVEGLEAATEEDWRTEYLDAIISVAVVDGISGAIEHIGTYSSNHTEAVIAEDPDVVARFFNELDSAILLHNASTQFADGGEFGMGAEIGIATGKMHARGPVGVEQLTSFKYRVHGTGQTRT</sequence>